<gene>
    <name evidence="1" type="primary">iolD2</name>
    <name type="ordered locus">pE33L466_0302</name>
</gene>
<protein>
    <recommendedName>
        <fullName evidence="1">3D-(3,5/4)-trihydroxycyclohexane-1,2-dione hydrolase 2</fullName>
        <shortName evidence="1">THcHDO hydrolase 2</shortName>
        <ecNumber evidence="1">3.7.1.22</ecNumber>
    </recommendedName>
</protein>
<sequence>MQTVRMTTAQALVKFLNQQYIEFDGEQQKFIKGIFTIFGHGNVVGLGQALEEDAGELEVYQGRNEQGMANAAMAFAKQKHRKQIMACTSSVGPGSANMITSAATASANNIPVLLLPGDVFATRQPDPVLQQIEQTHDLSISTNDAFRAVSKYWDRINRPEQLMTAMIQAMRVLTNPADTGAVTICLPQDVQGEAWDFPSYFFQKCVHRIERRLPTRASLADAVEMIKRKKKPVMICGGGVRYAEAAEELKQFAEAFRIPFGETQAGKSAIESSHPYNLGGIGVTGNLAANTIAKEADLVIGIGTRFTDFTTASKQLFQNEEVEFVNINISEFHANKLDALKVIADAKEALLALINELQAIEYRSSYTVEIAAAKEFWETELARLHNIRFTGQDFKPEVEGHFDDNLNEYVDALGTQLTQTAVIGEMNTLLDEDAIIVGAAGSLPGDLQRMWTSRKPNTYHMEYGYSCMGYEVAGALGAKLAEPSKEVYAMVGDGSYQMLHSELVTSLQENKKINVLLFDNSGFGCINNLQMGNGMGSFGTEFRYRNEETRKLNGAIMKIDFAASAAGYGVKTYRVTSVEQLQEALKDAKKQTVSTLIDIKVLPKTMTNGYESWWHVGVAEVSNSQSVQAAYESKVSNLQKARSY</sequence>
<organism>
    <name type="scientific">Bacillus cereus (strain ZK / E33L)</name>
    <dbReference type="NCBI Taxonomy" id="288681"/>
    <lineage>
        <taxon>Bacteria</taxon>
        <taxon>Bacillati</taxon>
        <taxon>Bacillota</taxon>
        <taxon>Bacilli</taxon>
        <taxon>Bacillales</taxon>
        <taxon>Bacillaceae</taxon>
        <taxon>Bacillus</taxon>
        <taxon>Bacillus cereus group</taxon>
    </lineage>
</organism>
<accession>Q4V1F5</accession>
<reference key="1">
    <citation type="journal article" date="2006" name="J. Bacteriol.">
        <title>Pathogenomic sequence analysis of Bacillus cereus and Bacillus thuringiensis isolates closely related to Bacillus anthracis.</title>
        <authorList>
            <person name="Han C.S."/>
            <person name="Xie G."/>
            <person name="Challacombe J.F."/>
            <person name="Altherr M.R."/>
            <person name="Bhotika S.S."/>
            <person name="Bruce D."/>
            <person name="Campbell C.S."/>
            <person name="Campbell M.L."/>
            <person name="Chen J."/>
            <person name="Chertkov O."/>
            <person name="Cleland C."/>
            <person name="Dimitrijevic M."/>
            <person name="Doggett N.A."/>
            <person name="Fawcett J.J."/>
            <person name="Glavina T."/>
            <person name="Goodwin L.A."/>
            <person name="Hill K.K."/>
            <person name="Hitchcock P."/>
            <person name="Jackson P.J."/>
            <person name="Keim P."/>
            <person name="Kewalramani A.R."/>
            <person name="Longmire J."/>
            <person name="Lucas S."/>
            <person name="Malfatti S."/>
            <person name="McMurry K."/>
            <person name="Meincke L.J."/>
            <person name="Misra M."/>
            <person name="Moseman B.L."/>
            <person name="Mundt M."/>
            <person name="Munk A.C."/>
            <person name="Okinaka R.T."/>
            <person name="Parson-Quintana B."/>
            <person name="Reilly L.P."/>
            <person name="Richardson P."/>
            <person name="Robinson D.L."/>
            <person name="Rubin E."/>
            <person name="Saunders E."/>
            <person name="Tapia R."/>
            <person name="Tesmer J.G."/>
            <person name="Thayer N."/>
            <person name="Thompson L.S."/>
            <person name="Tice H."/>
            <person name="Ticknor L.O."/>
            <person name="Wills P.L."/>
            <person name="Brettin T.S."/>
            <person name="Gilna P."/>
        </authorList>
    </citation>
    <scope>NUCLEOTIDE SEQUENCE [LARGE SCALE GENOMIC DNA]</scope>
    <source>
        <strain>ZK / E33L</strain>
    </source>
</reference>
<geneLocation type="plasmid">
    <name>pE33L466</name>
</geneLocation>
<proteinExistence type="inferred from homology"/>
<feature type="chain" id="PRO_0000352531" description="3D-(3,5/4)-trihydroxycyclohexane-1,2-dione hydrolase 2">
    <location>
        <begin position="1"/>
        <end position="644"/>
    </location>
</feature>
<feature type="region of interest" description="Thiamine pyrophosphate binding" evidence="1">
    <location>
        <begin position="442"/>
        <end position="522"/>
    </location>
</feature>
<feature type="binding site" evidence="1">
    <location>
        <position position="65"/>
    </location>
    <ligand>
        <name>thiamine diphosphate</name>
        <dbReference type="ChEBI" id="CHEBI:58937"/>
    </ligand>
</feature>
<feature type="binding site" evidence="1">
    <location>
        <position position="493"/>
    </location>
    <ligand>
        <name>Mg(2+)</name>
        <dbReference type="ChEBI" id="CHEBI:18420"/>
    </ligand>
</feature>
<feature type="binding site" evidence="1">
    <location>
        <position position="520"/>
    </location>
    <ligand>
        <name>Mg(2+)</name>
        <dbReference type="ChEBI" id="CHEBI:18420"/>
    </ligand>
</feature>
<name>IOLD2_BACCZ</name>
<keyword id="KW-0378">Hydrolase</keyword>
<keyword id="KW-0460">Magnesium</keyword>
<keyword id="KW-0479">Metal-binding</keyword>
<keyword id="KW-0520">NAD</keyword>
<keyword id="KW-0614">Plasmid</keyword>
<keyword id="KW-0786">Thiamine pyrophosphate</keyword>
<comment type="function">
    <text evidence="1">Involved in the cleavage of the C1-C2 bond of 3D-(3,5/4)-trihydroxycyclohexane-1,2-dione (THcHDO) to yield 5-deoxy-glucuronate (5DG).</text>
</comment>
<comment type="catalytic activity">
    <reaction evidence="1">
        <text>3D-3,5/4-trihydroxycyclohexane-1,2-dione + H2O = 5-deoxy-D-glucuronate + H(+)</text>
        <dbReference type="Rhea" id="RHEA:25836"/>
        <dbReference type="ChEBI" id="CHEBI:15377"/>
        <dbReference type="ChEBI" id="CHEBI:15378"/>
        <dbReference type="ChEBI" id="CHEBI:28446"/>
        <dbReference type="ChEBI" id="CHEBI:58852"/>
        <dbReference type="EC" id="3.7.1.22"/>
    </reaction>
</comment>
<comment type="cofactor">
    <cofactor evidence="1">
        <name>Mg(2+)</name>
        <dbReference type="ChEBI" id="CHEBI:18420"/>
    </cofactor>
    <text evidence="1">Binds 1 Mg(2+) ion per subunit.</text>
</comment>
<comment type="cofactor">
    <cofactor evidence="1">
        <name>thiamine diphosphate</name>
        <dbReference type="ChEBI" id="CHEBI:58937"/>
    </cofactor>
    <text evidence="1">Binds 1 thiamine pyrophosphate per subunit.</text>
</comment>
<comment type="pathway">
    <text evidence="1">Polyol metabolism; myo-inositol degradation into acetyl-CoA; acetyl-CoA from myo-inositol: step 3/7.</text>
</comment>
<comment type="similarity">
    <text evidence="1">Belongs to the TPP enzyme family.</text>
</comment>
<dbReference type="EC" id="3.7.1.22" evidence="1"/>
<dbReference type="EMBL" id="CP000040">
    <property type="protein sequence ID" value="AAY60452.1"/>
    <property type="molecule type" value="Genomic_DNA"/>
</dbReference>
<dbReference type="RefSeq" id="WP_001195334.1">
    <property type="nucleotide sequence ID" value="NC_007103.1"/>
</dbReference>
<dbReference type="SMR" id="Q4V1F5"/>
<dbReference type="KEGG" id="bcz:pE33L466_0302"/>
<dbReference type="PATRIC" id="fig|288681.22.peg.5504"/>
<dbReference type="UniPathway" id="UPA00076">
    <property type="reaction ID" value="UER00145"/>
</dbReference>
<dbReference type="Proteomes" id="UP000002612">
    <property type="component" value="Plasmid pE33L466"/>
</dbReference>
<dbReference type="GO" id="GO:0005948">
    <property type="term" value="C:acetolactate synthase complex"/>
    <property type="evidence" value="ECO:0007669"/>
    <property type="project" value="TreeGrafter"/>
</dbReference>
<dbReference type="GO" id="GO:0102481">
    <property type="term" value="F:3D-(3,5/4)-trihydroxycyclohexane-1,2-dione hydrolase activity"/>
    <property type="evidence" value="ECO:0007669"/>
    <property type="project" value="UniProtKB-EC"/>
</dbReference>
<dbReference type="GO" id="GO:0003984">
    <property type="term" value="F:acetolactate synthase activity"/>
    <property type="evidence" value="ECO:0007669"/>
    <property type="project" value="TreeGrafter"/>
</dbReference>
<dbReference type="GO" id="GO:0050660">
    <property type="term" value="F:flavin adenine dinucleotide binding"/>
    <property type="evidence" value="ECO:0007669"/>
    <property type="project" value="TreeGrafter"/>
</dbReference>
<dbReference type="GO" id="GO:0000287">
    <property type="term" value="F:magnesium ion binding"/>
    <property type="evidence" value="ECO:0007669"/>
    <property type="project" value="UniProtKB-UniRule"/>
</dbReference>
<dbReference type="GO" id="GO:0030976">
    <property type="term" value="F:thiamine pyrophosphate binding"/>
    <property type="evidence" value="ECO:0007669"/>
    <property type="project" value="UniProtKB-UniRule"/>
</dbReference>
<dbReference type="GO" id="GO:0019310">
    <property type="term" value="P:inositol catabolic process"/>
    <property type="evidence" value="ECO:0007669"/>
    <property type="project" value="UniProtKB-UniRule"/>
</dbReference>
<dbReference type="GO" id="GO:0009097">
    <property type="term" value="P:isoleucine biosynthetic process"/>
    <property type="evidence" value="ECO:0007669"/>
    <property type="project" value="TreeGrafter"/>
</dbReference>
<dbReference type="GO" id="GO:0009099">
    <property type="term" value="P:L-valine biosynthetic process"/>
    <property type="evidence" value="ECO:0007669"/>
    <property type="project" value="TreeGrafter"/>
</dbReference>
<dbReference type="CDD" id="cd02003">
    <property type="entry name" value="TPP_IolD"/>
    <property type="match status" value="1"/>
</dbReference>
<dbReference type="CDD" id="cd07035">
    <property type="entry name" value="TPP_PYR_POX_like"/>
    <property type="match status" value="1"/>
</dbReference>
<dbReference type="FunFam" id="3.40.50.970:FF:000056">
    <property type="entry name" value="3D-(3,5/4)-trihydroxycyclohexane-1,2-dione hydrolase"/>
    <property type="match status" value="1"/>
</dbReference>
<dbReference type="Gene3D" id="3.40.50.970">
    <property type="match status" value="2"/>
</dbReference>
<dbReference type="Gene3D" id="3.40.50.1220">
    <property type="entry name" value="TPP-binding domain"/>
    <property type="match status" value="1"/>
</dbReference>
<dbReference type="HAMAP" id="MF_01669">
    <property type="entry name" value="IolD"/>
    <property type="match status" value="1"/>
</dbReference>
<dbReference type="InterPro" id="IPR029035">
    <property type="entry name" value="DHS-like_NAD/FAD-binding_dom"/>
</dbReference>
<dbReference type="InterPro" id="IPR030817">
    <property type="entry name" value="Myo_inos_IolD"/>
</dbReference>
<dbReference type="InterPro" id="IPR023757">
    <property type="entry name" value="THcHDO_hydrolase_firmi"/>
</dbReference>
<dbReference type="InterPro" id="IPR029061">
    <property type="entry name" value="THDP-binding"/>
</dbReference>
<dbReference type="InterPro" id="IPR012000">
    <property type="entry name" value="Thiamin_PyroP_enz_cen_dom"/>
</dbReference>
<dbReference type="InterPro" id="IPR012001">
    <property type="entry name" value="Thiamin_PyroP_enz_TPP-bd_dom"/>
</dbReference>
<dbReference type="InterPro" id="IPR000399">
    <property type="entry name" value="TPP-bd_CS"/>
</dbReference>
<dbReference type="InterPro" id="IPR045229">
    <property type="entry name" value="TPP_enz"/>
</dbReference>
<dbReference type="InterPro" id="IPR011766">
    <property type="entry name" value="TPP_enzyme_TPP-bd"/>
</dbReference>
<dbReference type="NCBIfam" id="TIGR04377">
    <property type="entry name" value="myo_inos_iolD"/>
    <property type="match status" value="1"/>
</dbReference>
<dbReference type="PANTHER" id="PTHR18968:SF9">
    <property type="entry name" value="3D-(3,5_4)-TRIHYDROXYCYCLOHEXANE-1,2-DIONE HYDROLASE"/>
    <property type="match status" value="1"/>
</dbReference>
<dbReference type="PANTHER" id="PTHR18968">
    <property type="entry name" value="THIAMINE PYROPHOSPHATE ENZYMES"/>
    <property type="match status" value="1"/>
</dbReference>
<dbReference type="Pfam" id="PF02775">
    <property type="entry name" value="TPP_enzyme_C"/>
    <property type="match status" value="1"/>
</dbReference>
<dbReference type="Pfam" id="PF00205">
    <property type="entry name" value="TPP_enzyme_M"/>
    <property type="match status" value="1"/>
</dbReference>
<dbReference type="Pfam" id="PF02776">
    <property type="entry name" value="TPP_enzyme_N"/>
    <property type="match status" value="1"/>
</dbReference>
<dbReference type="SUPFAM" id="SSF52467">
    <property type="entry name" value="DHS-like NAD/FAD-binding domain"/>
    <property type="match status" value="1"/>
</dbReference>
<dbReference type="SUPFAM" id="SSF159902">
    <property type="entry name" value="PH1570-like"/>
    <property type="match status" value="1"/>
</dbReference>
<dbReference type="SUPFAM" id="SSF52518">
    <property type="entry name" value="Thiamin diphosphate-binding fold (THDP-binding)"/>
    <property type="match status" value="2"/>
</dbReference>
<dbReference type="PROSITE" id="PS00187">
    <property type="entry name" value="TPP_ENZYMES"/>
    <property type="match status" value="1"/>
</dbReference>
<evidence type="ECO:0000255" key="1">
    <source>
        <dbReference type="HAMAP-Rule" id="MF_01669"/>
    </source>
</evidence>